<reference key="1">
    <citation type="journal article" date="2005" name="J. Clin. Invest.">
        <title>The DEAD-box RNA helicase Vad1 regulates multiple virulence-associated genes in Cryptococcus neoformans.</title>
        <authorList>
            <person name="Panepinto J."/>
            <person name="Liu L."/>
            <person name="Ramos J."/>
            <person name="Zhu X."/>
            <person name="Valyi-Nagy T."/>
            <person name="Eksi S."/>
            <person name="Fu J."/>
            <person name="Jaffe H.A."/>
            <person name="Wickes B.L."/>
            <person name="Williamson P.R."/>
        </authorList>
    </citation>
    <scope>NUCLEOTIDE SEQUENCE [GENOMIC DNA]</scope>
    <scope>FUNCTION</scope>
    <source>
        <strain>H99 / ATCC 208821 / CBS 10515 / FGSC 9487</strain>
    </source>
</reference>
<reference key="2">
    <citation type="submission" date="2004-06" db="EMBL/GenBank/DDBJ databases">
        <title>Multiple virulence-associated genes are dependent on VAD1 in the human fungal pathogen, Cryptococcus neoformans.</title>
        <authorList>
            <person name="Liu L."/>
            <person name="Panepinto J."/>
            <person name="Ramos J."/>
            <person name="Zhu X."/>
            <person name="Eksi S."/>
            <person name="Wickes B.L."/>
            <person name="Williamson P.R."/>
        </authorList>
    </citation>
    <scope>NUCLEOTIDE SEQUENCE [MRNA]</scope>
    <source>
        <strain>H99 / ATCC 208821 / CBS 10515 / FGSC 9487</strain>
    </source>
</reference>
<reference key="3">
    <citation type="journal article" date="2014" name="PLoS Genet.">
        <title>Analysis of the genome and transcriptome of Cryptococcus neoformans var. grubii reveals complex RNA expression and microevolution leading to virulence attenuation.</title>
        <authorList>
            <person name="Janbon G."/>
            <person name="Ormerod K.L."/>
            <person name="Paulet D."/>
            <person name="Byrnes E.J. III"/>
            <person name="Yadav V."/>
            <person name="Chatterjee G."/>
            <person name="Mullapudi N."/>
            <person name="Hon C.-C."/>
            <person name="Billmyre R.B."/>
            <person name="Brunel F."/>
            <person name="Bahn Y.-S."/>
            <person name="Chen W."/>
            <person name="Chen Y."/>
            <person name="Chow E.W.L."/>
            <person name="Coppee J.-Y."/>
            <person name="Floyd-Averette A."/>
            <person name="Gaillardin C."/>
            <person name="Gerik K.J."/>
            <person name="Goldberg J."/>
            <person name="Gonzalez-Hilarion S."/>
            <person name="Gujja S."/>
            <person name="Hamlin J.L."/>
            <person name="Hsueh Y.-P."/>
            <person name="Ianiri G."/>
            <person name="Jones S."/>
            <person name="Kodira C.D."/>
            <person name="Kozubowski L."/>
            <person name="Lam W."/>
            <person name="Marra M."/>
            <person name="Mesner L.D."/>
            <person name="Mieczkowski P.A."/>
            <person name="Moyrand F."/>
            <person name="Nielsen K."/>
            <person name="Proux C."/>
            <person name="Rossignol T."/>
            <person name="Schein J.E."/>
            <person name="Sun S."/>
            <person name="Wollschlaeger C."/>
            <person name="Wood I.A."/>
            <person name="Zeng Q."/>
            <person name="Neuveglise C."/>
            <person name="Newlon C.S."/>
            <person name="Perfect J.R."/>
            <person name="Lodge J.K."/>
            <person name="Idnurm A."/>
            <person name="Stajich J.E."/>
            <person name="Kronstad J.W."/>
            <person name="Sanyal K."/>
            <person name="Heitman J."/>
            <person name="Fraser J.A."/>
            <person name="Cuomo C.A."/>
            <person name="Dietrich F.S."/>
        </authorList>
    </citation>
    <scope>NUCLEOTIDE SEQUENCE [LARGE SCALE GENOMIC DNA]</scope>
    <source>
        <strain>H99 / ATCC 208821 / CBS 10515 / FGSC 9487</strain>
    </source>
</reference>
<reference key="4">
    <citation type="journal article" date="2015" name="Nat. Cell Biol.">
        <title>A conserved mechanism of TOR-dependent RCK-mediated mRNA degradation regulates autophagy.</title>
        <authorList>
            <person name="Hu G."/>
            <person name="McQuiston T."/>
            <person name="Bernard A."/>
            <person name="Park Y.D."/>
            <person name="Qiu J."/>
            <person name="Vural A."/>
            <person name="Zhang N."/>
            <person name="Waterman S.R."/>
            <person name="Blewett N.H."/>
            <person name="Myers T.G."/>
            <person name="Maraia R.J."/>
            <person name="Kehrl J.H."/>
            <person name="Uzel G."/>
            <person name="Klionsky D.J."/>
            <person name="Williamson P.R."/>
        </authorList>
    </citation>
    <scope>FUNCTION</scope>
    <scope>RNA-BINDING</scope>
    <scope>DISRUPTION PHENOTYPE</scope>
</reference>
<sequence length="616" mass="67652">MASSSTLANDDWKQGLAAPPKDLRPQTEDVTATQGSRFEDFGLRRELLMGIYTAGFERPSPIQEQAIPMALTGRDILARAKNGTGKTASFIIPTLNRINTSLSHIQALILVPTRELALQTSQVCKTLGAHIPNLQVMITTGGTTLRDDILRLQQPVHILVGTPGRILDLGSKGIAGLNKCGIFVMDEADKLLSEDFMPVIEQTLALCPQERQVMLFSATFPWTVKEFKDQHMVQPYEINLMDELTLKGVTQYYAYVEESQKVHCLNTLFSKLQINQSIIFCNSTNRVELLAKKVTELGYSCFYSHAKMQQAHRNRVFHDFRNGMTRNLVCSDLLTRGIDIQAVNVVINFDFPRTAESYLHRIGRSGRFGHLGLAISLLTLEDRHNLYRIESELGTEIAPIPAVIDPVLYVAPAMVEEERESPPPKPAAIAAPPAQQQPQQRQRQHPPVPSHQVAHHSPAAAPIQQQQQQQQQQQQPQYQLAYGQGPPQPQVPFQQANSSPAPAPLPSYPQQAPTQAQGPAQMQSPPSEPATQPQASAQIPVQGQTPPIQPRAQQQGQQQPSQPGQAEGQSQPNRRPNTGGFRGNGRGQGHRGRGRGRGGQPGHPGAGASQSQQAQA</sequence>
<proteinExistence type="evidence at protein level"/>
<name>DHH1_CRYNH</name>
<accession>Q58Z64</accession>
<accession>J9VTF9</accession>
<comment type="function">
    <text evidence="1 5 6">ATP-dependent RNA helicase involved in mRNA turnover, and more specifically in mRNA decapping. Is involved in G1/S DNA-damage checkpoint recovery, probably through the regulation of the translational status of a subset of mRNAs. May also have a role in translation and mRNA nuclear export (By similarity). Blocks autophagy in nutrient-rich conditions by, at least partly, binding and repressing the expression of a set of ATG genes, including ATG3, ATG7, ATG8, ATG19, ATG20 and ATG22 (PubMed:26098573). VAD1-mediated repression of autophagy is regulated by TOR-dependent phosphorylation of the decapping enzyme DCP2 (PubMed:26098573). Regulates multiple virulence-associated genes (PubMed:15765146). Repression of autophagy by VAD1 also regulates the pathogenesis (PubMed:26098573).</text>
</comment>
<comment type="catalytic activity">
    <reaction>
        <text>ATP + H2O = ADP + phosphate + H(+)</text>
        <dbReference type="Rhea" id="RHEA:13065"/>
        <dbReference type="ChEBI" id="CHEBI:15377"/>
        <dbReference type="ChEBI" id="CHEBI:15378"/>
        <dbReference type="ChEBI" id="CHEBI:30616"/>
        <dbReference type="ChEBI" id="CHEBI:43474"/>
        <dbReference type="ChEBI" id="CHEBI:456216"/>
        <dbReference type="EC" id="3.6.4.13"/>
    </reaction>
</comment>
<comment type="subcellular location">
    <subcellularLocation>
        <location evidence="1">Cytoplasm</location>
        <location evidence="1">P-body</location>
    </subcellularLocation>
    <text evidence="1">Is concentrated in several cytoplasmic foci called P bodies (or cytoplasmic processing bodies) which represent sites of mRNA decapping and 5' to 3' exonucleotidic decay.</text>
</comment>
<comment type="domain">
    <text>The Q motif is unique to and characteristic of the DEAD box family of RNA helicases and controls ATP binding and hydrolysis.</text>
</comment>
<comment type="disruption phenotype">
    <text evidence="6">Leads to an accumulation of autophagic bodies and increases autophagic flux accompanied by increased accumulation of ATG8 mRNA and protein in nutrient-replete conditions (PubMed:26098573).</text>
</comment>
<comment type="similarity">
    <text evidence="8">Belongs to the DEAD box helicase family. DDX6/DHH1 subfamily.</text>
</comment>
<keyword id="KW-0067">ATP-binding</keyword>
<keyword id="KW-0963">Cytoplasm</keyword>
<keyword id="KW-0347">Helicase</keyword>
<keyword id="KW-0378">Hydrolase</keyword>
<keyword id="KW-0507">mRNA processing</keyword>
<keyword id="KW-0509">mRNA transport</keyword>
<keyword id="KW-0547">Nucleotide-binding</keyword>
<keyword id="KW-0694">RNA-binding</keyword>
<keyword id="KW-0810">Translation regulation</keyword>
<keyword id="KW-0813">Transport</keyword>
<feature type="chain" id="PRO_0000232189" description="ATP-dependent RNA helicase VAD1">
    <location>
        <begin position="1"/>
        <end position="616"/>
    </location>
</feature>
<feature type="domain" description="Helicase ATP-binding" evidence="2">
    <location>
        <begin position="67"/>
        <end position="238"/>
    </location>
</feature>
<feature type="domain" description="Helicase C-terminal" evidence="3">
    <location>
        <begin position="248"/>
        <end position="408"/>
    </location>
</feature>
<feature type="region of interest" description="Disordered" evidence="4">
    <location>
        <begin position="1"/>
        <end position="35"/>
    </location>
</feature>
<feature type="region of interest" description="Disordered" evidence="4">
    <location>
        <begin position="416"/>
        <end position="616"/>
    </location>
</feature>
<feature type="short sequence motif" description="Q motif">
    <location>
        <begin position="36"/>
        <end position="64"/>
    </location>
</feature>
<feature type="short sequence motif" description="DEAD box">
    <location>
        <begin position="186"/>
        <end position="189"/>
    </location>
</feature>
<feature type="compositionally biased region" description="Low complexity" evidence="4">
    <location>
        <begin position="427"/>
        <end position="441"/>
    </location>
</feature>
<feature type="compositionally biased region" description="Low complexity" evidence="4">
    <location>
        <begin position="458"/>
        <end position="500"/>
    </location>
</feature>
<feature type="compositionally biased region" description="Low complexity" evidence="4">
    <location>
        <begin position="508"/>
        <end position="523"/>
    </location>
</feature>
<feature type="compositionally biased region" description="Polar residues" evidence="4">
    <location>
        <begin position="529"/>
        <end position="545"/>
    </location>
</feature>
<feature type="compositionally biased region" description="Low complexity" evidence="4">
    <location>
        <begin position="550"/>
        <end position="579"/>
    </location>
</feature>
<feature type="compositionally biased region" description="Low complexity" evidence="4">
    <location>
        <begin position="606"/>
        <end position="616"/>
    </location>
</feature>
<feature type="binding site">
    <location>
        <begin position="80"/>
        <end position="87"/>
    </location>
    <ligand>
        <name>ATP</name>
        <dbReference type="ChEBI" id="CHEBI:30616"/>
    </ligand>
</feature>
<organism>
    <name type="scientific">Cryptococcus neoformans var. grubii serotype A (strain H99 / ATCC 208821 / CBS 10515 / FGSC 9487)</name>
    <name type="common">Filobasidiella neoformans var. grubii</name>
    <dbReference type="NCBI Taxonomy" id="235443"/>
    <lineage>
        <taxon>Eukaryota</taxon>
        <taxon>Fungi</taxon>
        <taxon>Dikarya</taxon>
        <taxon>Basidiomycota</taxon>
        <taxon>Agaricomycotina</taxon>
        <taxon>Tremellomycetes</taxon>
        <taxon>Tremellales</taxon>
        <taxon>Cryptococcaceae</taxon>
        <taxon>Cryptococcus</taxon>
        <taxon>Cryptococcus neoformans species complex</taxon>
    </lineage>
</organism>
<dbReference type="EC" id="3.6.4.13" evidence="8"/>
<dbReference type="EMBL" id="AY654620">
    <property type="protein sequence ID" value="AAV41010.1"/>
    <property type="molecule type" value="Genomic_DNA"/>
</dbReference>
<dbReference type="EMBL" id="AY661864">
    <property type="protein sequence ID" value="AAV69745.1"/>
    <property type="molecule type" value="mRNA"/>
</dbReference>
<dbReference type="EMBL" id="CP003830">
    <property type="protein sequence ID" value="AFR97742.1"/>
    <property type="molecule type" value="Genomic_DNA"/>
</dbReference>
<dbReference type="RefSeq" id="XP_012052585.1">
    <property type="nucleotide sequence ID" value="XM_012197195.1"/>
</dbReference>
<dbReference type="SMR" id="Q58Z64"/>
<dbReference type="SwissPalm" id="Q58Z64"/>
<dbReference type="GeneID" id="23885236"/>
<dbReference type="KEGG" id="cng:CNAG_01537"/>
<dbReference type="VEuPathDB" id="FungiDB:CNAG_01537"/>
<dbReference type="HOGENOM" id="CLU_003041_30_2_1"/>
<dbReference type="OrthoDB" id="6413at5206"/>
<dbReference type="PHI-base" id="PHI:423"/>
<dbReference type="Proteomes" id="UP000010091">
    <property type="component" value="Chromosome 11"/>
</dbReference>
<dbReference type="GO" id="GO:0000932">
    <property type="term" value="C:P-body"/>
    <property type="evidence" value="ECO:0007669"/>
    <property type="project" value="UniProtKB-SubCell"/>
</dbReference>
<dbReference type="GO" id="GO:0005524">
    <property type="term" value="F:ATP binding"/>
    <property type="evidence" value="ECO:0007669"/>
    <property type="project" value="UniProtKB-KW"/>
</dbReference>
<dbReference type="GO" id="GO:0016887">
    <property type="term" value="F:ATP hydrolysis activity"/>
    <property type="evidence" value="ECO:0007669"/>
    <property type="project" value="RHEA"/>
</dbReference>
<dbReference type="GO" id="GO:0003723">
    <property type="term" value="F:RNA binding"/>
    <property type="evidence" value="ECO:0007669"/>
    <property type="project" value="UniProtKB-KW"/>
</dbReference>
<dbReference type="GO" id="GO:0003724">
    <property type="term" value="F:RNA helicase activity"/>
    <property type="evidence" value="ECO:0007669"/>
    <property type="project" value="UniProtKB-EC"/>
</dbReference>
<dbReference type="GO" id="GO:0006397">
    <property type="term" value="P:mRNA processing"/>
    <property type="evidence" value="ECO:0007669"/>
    <property type="project" value="UniProtKB-KW"/>
</dbReference>
<dbReference type="GO" id="GO:0051028">
    <property type="term" value="P:mRNA transport"/>
    <property type="evidence" value="ECO:0007669"/>
    <property type="project" value="UniProtKB-KW"/>
</dbReference>
<dbReference type="GO" id="GO:0006417">
    <property type="term" value="P:regulation of translation"/>
    <property type="evidence" value="ECO:0007669"/>
    <property type="project" value="UniProtKB-KW"/>
</dbReference>
<dbReference type="CDD" id="cd17940">
    <property type="entry name" value="DEADc_DDX6"/>
    <property type="match status" value="1"/>
</dbReference>
<dbReference type="CDD" id="cd18787">
    <property type="entry name" value="SF2_C_DEAD"/>
    <property type="match status" value="1"/>
</dbReference>
<dbReference type="FunFam" id="3.40.50.300:FF:000114">
    <property type="entry name" value="ATP-dependent RNA helicase DDX6"/>
    <property type="match status" value="1"/>
</dbReference>
<dbReference type="Gene3D" id="3.40.50.300">
    <property type="entry name" value="P-loop containing nucleotide triphosphate hydrolases"/>
    <property type="match status" value="2"/>
</dbReference>
<dbReference type="InterPro" id="IPR011545">
    <property type="entry name" value="DEAD/DEAH_box_helicase_dom"/>
</dbReference>
<dbReference type="InterPro" id="IPR014001">
    <property type="entry name" value="Helicase_ATP-bd"/>
</dbReference>
<dbReference type="InterPro" id="IPR001650">
    <property type="entry name" value="Helicase_C-like"/>
</dbReference>
<dbReference type="InterPro" id="IPR027417">
    <property type="entry name" value="P-loop_NTPase"/>
</dbReference>
<dbReference type="InterPro" id="IPR000629">
    <property type="entry name" value="RNA-helicase_DEAD-box_CS"/>
</dbReference>
<dbReference type="InterPro" id="IPR014014">
    <property type="entry name" value="RNA_helicase_DEAD_Q_motif"/>
</dbReference>
<dbReference type="PANTHER" id="PTHR47960">
    <property type="entry name" value="DEAD-BOX ATP-DEPENDENT RNA HELICASE 50"/>
    <property type="match status" value="1"/>
</dbReference>
<dbReference type="Pfam" id="PF00270">
    <property type="entry name" value="DEAD"/>
    <property type="match status" value="1"/>
</dbReference>
<dbReference type="Pfam" id="PF00271">
    <property type="entry name" value="Helicase_C"/>
    <property type="match status" value="1"/>
</dbReference>
<dbReference type="SMART" id="SM00487">
    <property type="entry name" value="DEXDc"/>
    <property type="match status" value="1"/>
</dbReference>
<dbReference type="SMART" id="SM00490">
    <property type="entry name" value="HELICc"/>
    <property type="match status" value="1"/>
</dbReference>
<dbReference type="SUPFAM" id="SSF52540">
    <property type="entry name" value="P-loop containing nucleoside triphosphate hydrolases"/>
    <property type="match status" value="1"/>
</dbReference>
<dbReference type="PROSITE" id="PS00039">
    <property type="entry name" value="DEAD_ATP_HELICASE"/>
    <property type="match status" value="1"/>
</dbReference>
<dbReference type="PROSITE" id="PS51192">
    <property type="entry name" value="HELICASE_ATP_BIND_1"/>
    <property type="match status" value="1"/>
</dbReference>
<dbReference type="PROSITE" id="PS51194">
    <property type="entry name" value="HELICASE_CTER"/>
    <property type="match status" value="1"/>
</dbReference>
<dbReference type="PROSITE" id="PS51195">
    <property type="entry name" value="Q_MOTIF"/>
    <property type="match status" value="1"/>
</dbReference>
<evidence type="ECO:0000250" key="1"/>
<evidence type="ECO:0000255" key="2">
    <source>
        <dbReference type="PROSITE-ProRule" id="PRU00541"/>
    </source>
</evidence>
<evidence type="ECO:0000255" key="3">
    <source>
        <dbReference type="PROSITE-ProRule" id="PRU00542"/>
    </source>
</evidence>
<evidence type="ECO:0000256" key="4">
    <source>
        <dbReference type="SAM" id="MobiDB-lite"/>
    </source>
</evidence>
<evidence type="ECO:0000269" key="5">
    <source>
    </source>
</evidence>
<evidence type="ECO:0000269" key="6">
    <source>
    </source>
</evidence>
<evidence type="ECO:0000303" key="7">
    <source>
    </source>
</evidence>
<evidence type="ECO:0000305" key="8"/>
<gene>
    <name evidence="7" type="primary">VAD1</name>
    <name type="synonym">DHH1</name>
    <name type="ORF">CNAG_01537</name>
</gene>
<protein>
    <recommendedName>
        <fullName evidence="8">ATP-dependent RNA helicase VAD1</fullName>
        <ecNumber evidence="8">3.6.4.13</ecNumber>
    </recommendedName>
    <alternativeName>
        <fullName evidence="7">Virulence-associated DEAD box protein 1</fullName>
    </alternativeName>
</protein>